<comment type="function">
    <text evidence="1">Globally modulates RNA abundance by binding to RNase E (Rne) and regulating its endonucleolytic activity. Can modulate Rne action in a substrate-dependent manner by altering the composition of the degradosome. Modulates RNA-binding and helicase activities of the degradosome.</text>
</comment>
<comment type="subunit">
    <text evidence="1">Homotrimer. Binds to both RNA-binding sites in the C-terminal region of Rne and to RhlB.</text>
</comment>
<comment type="subcellular location">
    <subcellularLocation>
        <location evidence="1">Cytoplasm</location>
    </subcellularLocation>
</comment>
<comment type="similarity">
    <text evidence="1">Belongs to the RraA family.</text>
</comment>
<evidence type="ECO:0000255" key="1">
    <source>
        <dbReference type="HAMAP-Rule" id="MF_00471"/>
    </source>
</evidence>
<organism>
    <name type="scientific">Salmonella choleraesuis (strain SC-B67)</name>
    <dbReference type="NCBI Taxonomy" id="321314"/>
    <lineage>
        <taxon>Bacteria</taxon>
        <taxon>Pseudomonadati</taxon>
        <taxon>Pseudomonadota</taxon>
        <taxon>Gammaproteobacteria</taxon>
        <taxon>Enterobacterales</taxon>
        <taxon>Enterobacteriaceae</taxon>
        <taxon>Salmonella</taxon>
    </lineage>
</organism>
<name>RRAA_SALCH</name>
<proteinExistence type="inferred from homology"/>
<reference key="1">
    <citation type="journal article" date="2005" name="Nucleic Acids Res.">
        <title>The genome sequence of Salmonella enterica serovar Choleraesuis, a highly invasive and resistant zoonotic pathogen.</title>
        <authorList>
            <person name="Chiu C.-H."/>
            <person name="Tang P."/>
            <person name="Chu C."/>
            <person name="Hu S."/>
            <person name="Bao Q."/>
            <person name="Yu J."/>
            <person name="Chou Y.-Y."/>
            <person name="Wang H.-S."/>
            <person name="Lee Y.-S."/>
        </authorList>
    </citation>
    <scope>NUCLEOTIDE SEQUENCE [LARGE SCALE GENOMIC DNA]</scope>
    <source>
        <strain>SC-B67</strain>
    </source>
</reference>
<accession>Q57HC8</accession>
<dbReference type="EMBL" id="AE017220">
    <property type="protein sequence ID" value="AAX67884.1"/>
    <property type="molecule type" value="Genomic_DNA"/>
</dbReference>
<dbReference type="RefSeq" id="WP_001541250.1">
    <property type="nucleotide sequence ID" value="NC_006905.1"/>
</dbReference>
<dbReference type="SMR" id="Q57HC8"/>
<dbReference type="KEGG" id="sec:SCH_3978"/>
<dbReference type="HOGENOM" id="CLU_072626_4_0_6"/>
<dbReference type="Proteomes" id="UP000000538">
    <property type="component" value="Chromosome"/>
</dbReference>
<dbReference type="GO" id="GO:0005829">
    <property type="term" value="C:cytosol"/>
    <property type="evidence" value="ECO:0007669"/>
    <property type="project" value="TreeGrafter"/>
</dbReference>
<dbReference type="GO" id="GO:0060698">
    <property type="term" value="F:endoribonuclease inhibitor activity"/>
    <property type="evidence" value="ECO:0007669"/>
    <property type="project" value="UniProtKB-UniRule"/>
</dbReference>
<dbReference type="GO" id="GO:0019899">
    <property type="term" value="F:enzyme binding"/>
    <property type="evidence" value="ECO:0007669"/>
    <property type="project" value="UniProtKB-UniRule"/>
</dbReference>
<dbReference type="GO" id="GO:1902369">
    <property type="term" value="P:negative regulation of RNA catabolic process"/>
    <property type="evidence" value="ECO:0007669"/>
    <property type="project" value="TreeGrafter"/>
</dbReference>
<dbReference type="CDD" id="cd16841">
    <property type="entry name" value="RraA_family"/>
    <property type="match status" value="1"/>
</dbReference>
<dbReference type="FunFam" id="3.50.30.40:FF:000001">
    <property type="entry name" value="Regulator of ribonuclease activity A"/>
    <property type="match status" value="1"/>
</dbReference>
<dbReference type="Gene3D" id="3.50.30.40">
    <property type="entry name" value="Ribonuclease E inhibitor RraA/RraA-like"/>
    <property type="match status" value="1"/>
</dbReference>
<dbReference type="HAMAP" id="MF_00471">
    <property type="entry name" value="RraA"/>
    <property type="match status" value="1"/>
</dbReference>
<dbReference type="InterPro" id="IPR010203">
    <property type="entry name" value="RraA"/>
</dbReference>
<dbReference type="InterPro" id="IPR005493">
    <property type="entry name" value="RraA/RraA-like"/>
</dbReference>
<dbReference type="InterPro" id="IPR036704">
    <property type="entry name" value="RraA/RraA-like_sf"/>
</dbReference>
<dbReference type="InterPro" id="IPR014339">
    <property type="entry name" value="RraA_gpbac"/>
</dbReference>
<dbReference type="NCBIfam" id="TIGR01935">
    <property type="entry name" value="NOT-MenG"/>
    <property type="match status" value="1"/>
</dbReference>
<dbReference type="NCBIfam" id="NF006875">
    <property type="entry name" value="PRK09372.1"/>
    <property type="match status" value="1"/>
</dbReference>
<dbReference type="NCBIfam" id="TIGR02998">
    <property type="entry name" value="RraA_entero"/>
    <property type="match status" value="1"/>
</dbReference>
<dbReference type="PANTHER" id="PTHR33254">
    <property type="entry name" value="4-HYDROXY-4-METHYL-2-OXOGLUTARATE ALDOLASE 3-RELATED"/>
    <property type="match status" value="1"/>
</dbReference>
<dbReference type="PANTHER" id="PTHR33254:SF29">
    <property type="entry name" value="REGULATOR OF RIBONUCLEASE ACTIVITY A"/>
    <property type="match status" value="1"/>
</dbReference>
<dbReference type="Pfam" id="PF03737">
    <property type="entry name" value="RraA-like"/>
    <property type="match status" value="1"/>
</dbReference>
<dbReference type="SUPFAM" id="SSF89562">
    <property type="entry name" value="RraA-like"/>
    <property type="match status" value="1"/>
</dbReference>
<feature type="chain" id="PRO_1000013869" description="Regulator of ribonuclease activity A">
    <location>
        <begin position="1"/>
        <end position="161"/>
    </location>
</feature>
<sequence>MKYDTSELCDIYQEDVNVVEPLFSNFGGRSSFGGQIITVKCFEDNGLLYDLLEQNGRGRVLLVDGGGSIRRALVDAELARLATQNEWEGLVIYGAVRQVDDLEELDIGIQAIAAIPVGAAGEGIGESDVRVNFGGVTFFSGDHLYADNTGIILSEDPLDIE</sequence>
<protein>
    <recommendedName>
        <fullName evidence="1">Regulator of ribonuclease activity A</fullName>
    </recommendedName>
</protein>
<keyword id="KW-0963">Cytoplasm</keyword>
<gene>
    <name evidence="1" type="primary">rraA</name>
    <name type="ordered locus">SCH_3978</name>
</gene>